<gene>
    <name type="primary">HSFB2B</name>
    <name type="synonym">HSF2</name>
    <name type="synonym">HSF21</name>
    <name type="ordered locus">Os08g0546800</name>
    <name type="ordered locus">LOC_Os08g43334</name>
    <name type="ORF">OJ1323_A06.29</name>
    <name type="ORF">P0544G09.1</name>
</gene>
<protein>
    <recommendedName>
        <fullName>Heat stress transcription factor B-2b</fullName>
    </recommendedName>
    <alternativeName>
        <fullName>Heat stress transcription factor 2</fullName>
        <shortName>rHsf2</shortName>
    </alternativeName>
    <alternativeName>
        <fullName>Heat stress transcription factor 21</fullName>
        <shortName>OsHsf-21</shortName>
    </alternativeName>
</protein>
<feature type="chain" id="PRO_0000350835" description="Heat stress transcription factor B-2b">
    <location>
        <begin position="1"/>
        <end position="390"/>
    </location>
</feature>
<feature type="region of interest" description="Disordered" evidence="3">
    <location>
        <begin position="165"/>
        <end position="212"/>
    </location>
</feature>
<feature type="region of interest" description="Hydrophobic repeat HR-A/B">
    <location>
        <begin position="215"/>
        <end position="244"/>
    </location>
</feature>
<feature type="region of interest" description="Disordered" evidence="3">
    <location>
        <begin position="322"/>
        <end position="363"/>
    </location>
</feature>
<feature type="coiled-coil region" evidence="2">
    <location>
        <begin position="206"/>
        <end position="237"/>
    </location>
</feature>
<feature type="short sequence motif" description="Nuclear localization signal" evidence="2">
    <location>
        <begin position="318"/>
        <end position="322"/>
    </location>
</feature>
<feature type="compositionally biased region" description="Basic and acidic residues" evidence="3">
    <location>
        <begin position="323"/>
        <end position="350"/>
    </location>
</feature>
<reference key="1">
    <citation type="submission" date="2003-07" db="EMBL/GenBank/DDBJ databases">
        <title>Isolation rice heat shock factor by modified yeast one-hybrid system method.</title>
        <authorList>
            <person name="Yao Q.-H."/>
            <person name="Peng R.-H."/>
            <person name="Xiong A.-S."/>
        </authorList>
    </citation>
    <scope>NUCLEOTIDE SEQUENCE [MRNA]</scope>
</reference>
<reference key="2">
    <citation type="journal article" date="2005" name="Nature">
        <title>The map-based sequence of the rice genome.</title>
        <authorList>
            <consortium name="International rice genome sequencing project (IRGSP)"/>
        </authorList>
    </citation>
    <scope>NUCLEOTIDE SEQUENCE [LARGE SCALE GENOMIC DNA]</scope>
    <source>
        <strain>cv. Nipponbare</strain>
    </source>
</reference>
<reference key="3">
    <citation type="journal article" date="2008" name="Nucleic Acids Res.">
        <title>The rice annotation project database (RAP-DB): 2008 update.</title>
        <authorList>
            <consortium name="The rice annotation project (RAP)"/>
        </authorList>
    </citation>
    <scope>GENOME REANNOTATION</scope>
    <source>
        <strain>cv. Nipponbare</strain>
    </source>
</reference>
<reference key="4">
    <citation type="journal article" date="2013" name="Rice">
        <title>Improvement of the Oryza sativa Nipponbare reference genome using next generation sequence and optical map data.</title>
        <authorList>
            <person name="Kawahara Y."/>
            <person name="de la Bastide M."/>
            <person name="Hamilton J.P."/>
            <person name="Kanamori H."/>
            <person name="McCombie W.R."/>
            <person name="Ouyang S."/>
            <person name="Schwartz D.C."/>
            <person name="Tanaka T."/>
            <person name="Wu J."/>
            <person name="Zhou S."/>
            <person name="Childs K.L."/>
            <person name="Davidson R.M."/>
            <person name="Lin H."/>
            <person name="Quesada-Ocampo L."/>
            <person name="Vaillancourt B."/>
            <person name="Sakai H."/>
            <person name="Lee S.S."/>
            <person name="Kim J."/>
            <person name="Numa H."/>
            <person name="Itoh T."/>
            <person name="Buell C.R."/>
            <person name="Matsumoto T."/>
        </authorList>
    </citation>
    <scope>GENOME REANNOTATION</scope>
    <source>
        <strain>cv. Nipponbare</strain>
    </source>
</reference>
<reference key="5">
    <citation type="journal article" date="2003" name="Science">
        <title>Collection, mapping, and annotation of over 28,000 cDNA clones from japonica rice.</title>
        <authorList>
            <consortium name="The rice full-length cDNA consortium"/>
        </authorList>
    </citation>
    <scope>NUCLEOTIDE SEQUENCE [LARGE SCALE MRNA]</scope>
    <source>
        <strain>cv. Nipponbare</strain>
    </source>
</reference>
<reference key="6">
    <citation type="journal article" date="2004" name="J. Biosci.">
        <title>Heat stress response in plants: a complex game with chaperones and more than twenty heat stress transcription factors.</title>
        <authorList>
            <person name="Baniwal S.K."/>
            <person name="Bharti K."/>
            <person name="Chan K.Y."/>
            <person name="Fauth M."/>
            <person name="Ganguli A."/>
            <person name="Kotak S."/>
            <person name="Mishra S.K."/>
            <person name="Nover L."/>
            <person name="Port M."/>
            <person name="Scharf K.-D."/>
            <person name="Tripp J."/>
            <person name="Weber C."/>
            <person name="Zielinski D."/>
            <person name="von Koskull-Doering P."/>
        </authorList>
    </citation>
    <scope>GENE FAMILY</scope>
    <scope>NOMENCLATURE</scope>
</reference>
<reference key="7">
    <citation type="journal article" date="2008" name="J. Genet. Genomics">
        <title>Genome-wide analysis of heat shock transcription factor families in rice and Arabidopsis.</title>
        <authorList>
            <person name="Guo J."/>
            <person name="Wu J."/>
            <person name="Ji Q."/>
            <person name="Wang C."/>
            <person name="Luo L."/>
            <person name="Yuan Y."/>
            <person name="Wang Y."/>
            <person name="Wang J."/>
        </authorList>
    </citation>
    <scope>GENE FAMILY</scope>
    <scope>NOMENCLATURE</scope>
</reference>
<evidence type="ECO:0000250" key="1"/>
<evidence type="ECO:0000255" key="2"/>
<evidence type="ECO:0000256" key="3">
    <source>
        <dbReference type="SAM" id="MobiDB-lite"/>
    </source>
</evidence>
<evidence type="ECO:0000305" key="4"/>
<sequence>MADQTAAAVVVGGGAAATMGEPSPPPPAPAAEAAGVGVGQQQRTVPTPFLTKTYQLVDDPAVDDVISWNDDGSTFVVWRPAEFARDLLPKYFKHNNFSSFVRQLNTYGFRKIVPDRWEFANDCFRRGERRLLCEIHRRKVTPPAPAATTAAVAAAIPMALPVTTTRDGSPVLSGEEQVISSSSSPEPPLVLPQAPSGSGSGGVASGDVGDENERLRRENAQLARELSQMRKLCNNILLLMSKYASTQQLDAANASSAAGNNNNNNCSGESAEAATPLPLPAVLDLMPSCPGAASAAAPVSDNEEGMMSAKLFGVSIGRKRMRHDGGGDDDHAATVKAEPMDGRPHGKDEQSAETQAWPIYRPRPVYQPIRACNGYEYDRAGSDQDGSNST</sequence>
<comment type="function">
    <text evidence="1">Transcriptional regulator that specifically binds DNA of heat shock promoter elements (HSE).</text>
</comment>
<comment type="subunit">
    <text evidence="1">Homotrimer.</text>
</comment>
<comment type="subcellular location">
    <subcellularLocation>
        <location evidence="4">Nucleus</location>
    </subcellularLocation>
</comment>
<comment type="domain">
    <text>The hydrophobic-rich region (HR-A/B) corresponds to the oligomerization domain.</text>
</comment>
<comment type="PTM">
    <text evidence="1">Exhibits temperature-dependent phosphorylation.</text>
</comment>
<comment type="similarity">
    <text evidence="4">Belongs to the HSF family. Class B subfamily.</text>
</comment>
<comment type="sequence caution" evidence="4">
    <conflict type="miscellaneous discrepancy">
        <sequence resource="EMBL-CDS" id="AAQ23056"/>
    </conflict>
    <text>Probable cloning artifact leading to an alternatively spliced sequence.</text>
</comment>
<comment type="sequence caution" evidence="4">
    <conflict type="erroneous gene model prediction">
        <sequence resource="EMBL-CDS" id="BAF24337"/>
    </conflict>
</comment>
<accession>Q6Z9C8</accession>
<accession>B7ES48</accession>
<accession>Q6VBB5</accession>
<organism>
    <name type="scientific">Oryza sativa subsp. japonica</name>
    <name type="common">Rice</name>
    <dbReference type="NCBI Taxonomy" id="39947"/>
    <lineage>
        <taxon>Eukaryota</taxon>
        <taxon>Viridiplantae</taxon>
        <taxon>Streptophyta</taxon>
        <taxon>Embryophyta</taxon>
        <taxon>Tracheophyta</taxon>
        <taxon>Spermatophyta</taxon>
        <taxon>Magnoliopsida</taxon>
        <taxon>Liliopsida</taxon>
        <taxon>Poales</taxon>
        <taxon>Poaceae</taxon>
        <taxon>BOP clade</taxon>
        <taxon>Oryzoideae</taxon>
        <taxon>Oryzeae</taxon>
        <taxon>Oryzinae</taxon>
        <taxon>Oryza</taxon>
        <taxon>Oryza sativa</taxon>
    </lineage>
</organism>
<dbReference type="EMBL" id="AY344484">
    <property type="protein sequence ID" value="AAQ23056.1"/>
    <property type="status" value="ALT_SEQ"/>
    <property type="molecule type" value="mRNA"/>
</dbReference>
<dbReference type="EMBL" id="AP004163">
    <property type="protein sequence ID" value="BAD09238.1"/>
    <property type="molecule type" value="Genomic_DNA"/>
</dbReference>
<dbReference type="EMBL" id="AP004704">
    <property type="protein sequence ID" value="BAD09926.1"/>
    <property type="molecule type" value="Genomic_DNA"/>
</dbReference>
<dbReference type="EMBL" id="AP008214">
    <property type="protein sequence ID" value="BAF24337.1"/>
    <property type="status" value="ALT_SEQ"/>
    <property type="molecule type" value="Genomic_DNA"/>
</dbReference>
<dbReference type="EMBL" id="AP014964">
    <property type="protein sequence ID" value="BAT06546.1"/>
    <property type="molecule type" value="Genomic_DNA"/>
</dbReference>
<dbReference type="EMBL" id="AK101700">
    <property type="protein sequence ID" value="BAG95195.1"/>
    <property type="molecule type" value="mRNA"/>
</dbReference>
<dbReference type="RefSeq" id="XP_015648719.1">
    <property type="nucleotide sequence ID" value="XM_015793233.1"/>
</dbReference>
<dbReference type="SMR" id="Q6Z9C8"/>
<dbReference type="FunCoup" id="Q6Z9C8">
    <property type="interactions" value="215"/>
</dbReference>
<dbReference type="STRING" id="39947.Q6Z9C8"/>
<dbReference type="PaxDb" id="39947-Q6Z9C8"/>
<dbReference type="EnsemblPlants" id="Os08t0546800-01">
    <property type="protein sequence ID" value="Os08t0546800-01"/>
    <property type="gene ID" value="Os08g0546800"/>
</dbReference>
<dbReference type="Gramene" id="Os08t0546800-01">
    <property type="protein sequence ID" value="Os08t0546800-01"/>
    <property type="gene ID" value="Os08g0546800"/>
</dbReference>
<dbReference type="KEGG" id="dosa:Os08g0546800"/>
<dbReference type="eggNOG" id="KOG0627">
    <property type="taxonomic scope" value="Eukaryota"/>
</dbReference>
<dbReference type="HOGENOM" id="CLU_030308_3_3_1"/>
<dbReference type="InParanoid" id="Q6Z9C8"/>
<dbReference type="OMA" id="KYASTQQ"/>
<dbReference type="OrthoDB" id="60033at2759"/>
<dbReference type="Proteomes" id="UP000000763">
    <property type="component" value="Chromosome 8"/>
</dbReference>
<dbReference type="Proteomes" id="UP000059680">
    <property type="component" value="Chromosome 8"/>
</dbReference>
<dbReference type="GO" id="GO:0005634">
    <property type="term" value="C:nucleus"/>
    <property type="evidence" value="ECO:0000318"/>
    <property type="project" value="GO_Central"/>
</dbReference>
<dbReference type="GO" id="GO:0003700">
    <property type="term" value="F:DNA-binding transcription factor activity"/>
    <property type="evidence" value="ECO:0000318"/>
    <property type="project" value="GO_Central"/>
</dbReference>
<dbReference type="GO" id="GO:0043565">
    <property type="term" value="F:sequence-specific DNA binding"/>
    <property type="evidence" value="ECO:0007669"/>
    <property type="project" value="InterPro"/>
</dbReference>
<dbReference type="GO" id="GO:0006357">
    <property type="term" value="P:regulation of transcription by RNA polymerase II"/>
    <property type="evidence" value="ECO:0000318"/>
    <property type="project" value="GO_Central"/>
</dbReference>
<dbReference type="FunFam" id="1.10.10.10:FF:000037">
    <property type="entry name" value="Heat stress transcription factor B-4"/>
    <property type="match status" value="1"/>
</dbReference>
<dbReference type="Gene3D" id="1.10.10.10">
    <property type="entry name" value="Winged helix-like DNA-binding domain superfamily/Winged helix DNA-binding domain"/>
    <property type="match status" value="1"/>
</dbReference>
<dbReference type="InterPro" id="IPR000232">
    <property type="entry name" value="HSF_DNA-bd"/>
</dbReference>
<dbReference type="InterPro" id="IPR036388">
    <property type="entry name" value="WH-like_DNA-bd_sf"/>
</dbReference>
<dbReference type="InterPro" id="IPR036390">
    <property type="entry name" value="WH_DNA-bd_sf"/>
</dbReference>
<dbReference type="PANTHER" id="PTHR10015">
    <property type="entry name" value="HEAT SHOCK TRANSCRIPTION FACTOR"/>
    <property type="match status" value="1"/>
</dbReference>
<dbReference type="PANTHER" id="PTHR10015:SF169">
    <property type="entry name" value="HEAT STRESS TRANSCRIPTION FACTOR B-2B"/>
    <property type="match status" value="1"/>
</dbReference>
<dbReference type="Pfam" id="PF00447">
    <property type="entry name" value="HSF_DNA-bind"/>
    <property type="match status" value="1"/>
</dbReference>
<dbReference type="PRINTS" id="PR00056">
    <property type="entry name" value="HSFDOMAIN"/>
</dbReference>
<dbReference type="SMART" id="SM00415">
    <property type="entry name" value="HSF"/>
    <property type="match status" value="1"/>
</dbReference>
<dbReference type="SUPFAM" id="SSF46785">
    <property type="entry name" value="Winged helix' DNA-binding domain"/>
    <property type="match status" value="1"/>
</dbReference>
<dbReference type="PROSITE" id="PS00434">
    <property type="entry name" value="HSF_DOMAIN"/>
    <property type="match status" value="1"/>
</dbReference>
<keyword id="KW-0175">Coiled coil</keyword>
<keyword id="KW-0238">DNA-binding</keyword>
<keyword id="KW-0539">Nucleus</keyword>
<keyword id="KW-0597">Phosphoprotein</keyword>
<keyword id="KW-1185">Reference proteome</keyword>
<keyword id="KW-0346">Stress response</keyword>
<keyword id="KW-0804">Transcription</keyword>
<keyword id="KW-0805">Transcription regulation</keyword>
<name>HFB2B_ORYSJ</name>
<proteinExistence type="evidence at transcript level"/>